<organism>
    <name type="scientific">Oryctolagus cuniculus</name>
    <name type="common">Rabbit</name>
    <dbReference type="NCBI Taxonomy" id="9986"/>
    <lineage>
        <taxon>Eukaryota</taxon>
        <taxon>Metazoa</taxon>
        <taxon>Chordata</taxon>
        <taxon>Craniata</taxon>
        <taxon>Vertebrata</taxon>
        <taxon>Euteleostomi</taxon>
        <taxon>Mammalia</taxon>
        <taxon>Eutheria</taxon>
        <taxon>Euarchontoglires</taxon>
        <taxon>Glires</taxon>
        <taxon>Lagomorpha</taxon>
        <taxon>Leporidae</taxon>
        <taxon>Oryctolagus</taxon>
    </lineage>
</organism>
<comment type="miscellaneous">
    <text>This chain was obtained from antibody to p-azobenzoate and was isolated from the serum of a single rabbit.</text>
</comment>
<proteinExistence type="evidence at protein level"/>
<keyword id="KW-1064">Adaptive immunity</keyword>
<keyword id="KW-0903">Direct protein sequencing</keyword>
<keyword id="KW-0391">Immunity</keyword>
<keyword id="KW-1280">Immunoglobulin</keyword>
<keyword id="KW-1185">Reference proteome</keyword>
<accession>P01682</accession>
<protein>
    <recommendedName>
        <fullName>Ig kappa chain V region 2717</fullName>
    </recommendedName>
</protein>
<dbReference type="PIR" id="A01945">
    <property type="entry name" value="K4RB27"/>
</dbReference>
<dbReference type="FunCoup" id="P01682">
    <property type="interactions" value="277"/>
</dbReference>
<dbReference type="STRING" id="9986.ENSOCUP00000028391"/>
<dbReference type="InParanoid" id="P01682"/>
<dbReference type="Proteomes" id="UP000001811">
    <property type="component" value="Unplaced"/>
</dbReference>
<dbReference type="GO" id="GO:0019814">
    <property type="term" value="C:immunoglobulin complex"/>
    <property type="evidence" value="ECO:0007669"/>
    <property type="project" value="UniProtKB-KW"/>
</dbReference>
<dbReference type="GO" id="GO:0002250">
    <property type="term" value="P:adaptive immune response"/>
    <property type="evidence" value="ECO:0007669"/>
    <property type="project" value="UniProtKB-KW"/>
</dbReference>
<dbReference type="FunFam" id="2.60.40.10:FF:000350">
    <property type="entry name" value="Immunoglobulin kappa chain variable 18-36"/>
    <property type="match status" value="1"/>
</dbReference>
<dbReference type="Gene3D" id="2.60.40.10">
    <property type="entry name" value="Immunoglobulins"/>
    <property type="match status" value="1"/>
</dbReference>
<dbReference type="InterPro" id="IPR007110">
    <property type="entry name" value="Ig-like_dom"/>
</dbReference>
<dbReference type="InterPro" id="IPR036179">
    <property type="entry name" value="Ig-like_dom_sf"/>
</dbReference>
<dbReference type="InterPro" id="IPR013783">
    <property type="entry name" value="Ig-like_fold"/>
</dbReference>
<dbReference type="InterPro" id="IPR003599">
    <property type="entry name" value="Ig_sub"/>
</dbReference>
<dbReference type="InterPro" id="IPR013106">
    <property type="entry name" value="Ig_V-set"/>
</dbReference>
<dbReference type="InterPro" id="IPR050150">
    <property type="entry name" value="IgV_Light_Chain"/>
</dbReference>
<dbReference type="PANTHER" id="PTHR23267">
    <property type="entry name" value="IMMUNOGLOBULIN LIGHT CHAIN"/>
    <property type="match status" value="1"/>
</dbReference>
<dbReference type="Pfam" id="PF07686">
    <property type="entry name" value="V-set"/>
    <property type="match status" value="1"/>
</dbReference>
<dbReference type="SMART" id="SM00409">
    <property type="entry name" value="IG"/>
    <property type="match status" value="1"/>
</dbReference>
<dbReference type="SMART" id="SM00406">
    <property type="entry name" value="IGv"/>
    <property type="match status" value="1"/>
</dbReference>
<dbReference type="SUPFAM" id="SSF48726">
    <property type="entry name" value="Immunoglobulin"/>
    <property type="match status" value="1"/>
</dbReference>
<dbReference type="PROSITE" id="PS50835">
    <property type="entry name" value="IG_LIKE"/>
    <property type="match status" value="1"/>
</dbReference>
<reference key="1">
    <citation type="journal article" date="1973" name="Biochem. Biophys. Res. Commun.">
        <title>Amino acid sequence of the light chain derived from a rabbit anti-p-azobenzoate antibody of restricted heterogeneity.</title>
        <authorList>
            <person name="Appella E."/>
            <person name="Roholt O.A."/>
            <person name="Chersi A."/>
            <person name="Radzimski G."/>
            <person name="Pressman D."/>
        </authorList>
    </citation>
    <scope>PROTEIN SEQUENCE</scope>
</reference>
<feature type="chain" id="PRO_0000059720" description="Ig kappa chain V region 2717">
    <location>
        <begin position="1"/>
        <end position="110" status="greater than"/>
    </location>
</feature>
<feature type="region of interest" description="Framework-1">
    <location>
        <begin position="1"/>
        <end position="23"/>
    </location>
</feature>
<feature type="region of interest" description="Complementarity-determining-1">
    <location>
        <begin position="24"/>
        <end position="36"/>
    </location>
</feature>
<feature type="region of interest" description="Framework-2">
    <location>
        <begin position="37"/>
        <end position="51"/>
    </location>
</feature>
<feature type="region of interest" description="Complementarity-determining-2">
    <location>
        <begin position="52"/>
        <end position="58"/>
    </location>
</feature>
<feature type="region of interest" description="Framework-3">
    <location>
        <begin position="59"/>
        <end position="90"/>
    </location>
</feature>
<feature type="region of interest" description="Complementarity-determining-3">
    <location>
        <begin position="91"/>
        <end position="99"/>
    </location>
</feature>
<feature type="region of interest" description="Framework-4">
    <location>
        <begin position="100"/>
        <end position="109"/>
    </location>
</feature>
<feature type="site" description="At the hapten combining site">
    <location>
        <position position="98"/>
    </location>
</feature>
<feature type="non-terminal residue">
    <location>
        <position position="110"/>
    </location>
</feature>
<name>KV01_RABIT</name>
<sequence>VEVLTQTPSPVSAAVGGTVTISCQSTKSIYBBBYLAWYQZKPGQPPKALIYTASSLASGVPSRFTGSGSGTZFTLTLSDVZCDDAATYYCGGADYTGYSFGGGTEVVVKG</sequence>